<gene>
    <name evidence="1" type="primary">rnmV1</name>
    <name type="ordered locus">HN6_00222</name>
</gene>
<organism>
    <name type="scientific">Ligilactobacillus salivarius (strain CECT 5713)</name>
    <name type="common">Lactobacillus salivarius</name>
    <dbReference type="NCBI Taxonomy" id="712961"/>
    <lineage>
        <taxon>Bacteria</taxon>
        <taxon>Bacillati</taxon>
        <taxon>Bacillota</taxon>
        <taxon>Bacilli</taxon>
        <taxon>Lactobacillales</taxon>
        <taxon>Lactobacillaceae</taxon>
        <taxon>Ligilactobacillus</taxon>
    </lineage>
</organism>
<reference key="1">
    <citation type="journal article" date="2010" name="J. Bacteriol.">
        <title>Complete genome sequence of Lactobacillus salivarius CECT 5713, a probiotic strain isolated from human milk and infant feces.</title>
        <authorList>
            <person name="Jimenez E."/>
            <person name="Martin R."/>
            <person name="Maldonado A."/>
            <person name="Martin V."/>
            <person name="Gomez de Segura A."/>
            <person name="Fernandez L."/>
            <person name="Rodriguez J.M."/>
        </authorList>
    </citation>
    <scope>NUCLEOTIDE SEQUENCE [LARGE SCALE GENOMIC DNA]</scope>
    <source>
        <strain>CECT 5713</strain>
    </source>
</reference>
<comment type="function">
    <text evidence="1">Required for correct processing of both the 5' and 3' ends of 5S rRNA precursor. Cleaves both sides of a double-stranded region yielding mature 5S rRNA in one step.</text>
</comment>
<comment type="catalytic activity">
    <reaction evidence="1">
        <text>Endonucleolytic cleavage of RNA, removing 21 and 42 nucleotides, respectively, from the 5'- and 3'-termini of a 5S-rRNA precursor.</text>
        <dbReference type="EC" id="3.1.26.8"/>
    </reaction>
</comment>
<comment type="cofactor">
    <cofactor evidence="1">
        <name>Mg(2+)</name>
        <dbReference type="ChEBI" id="CHEBI:18420"/>
    </cofactor>
    <text evidence="1">Binds two Mg(2+) per subunit.</text>
</comment>
<comment type="subcellular location">
    <subcellularLocation>
        <location evidence="1">Cytoplasm</location>
    </subcellularLocation>
</comment>
<comment type="similarity">
    <text evidence="1">Belongs to the ribonuclease M5 family.</text>
</comment>
<sequence>MNENDKMKIKEVIVVEGKDDTKRIQMAVNADTLETRGSAISDETLDQIEDLYDKRGVIVFTDPDFSGEKIRKIITEAVPGVKHAFLTKHDAAPSHKGSLGVEHASPEAIREALAHLYTEVPDGEPLISREDLAVAGLTSGPQAKEYRRRLGEYLRIGYTNGKQLYKRLKLFQITPDELKKALEYIKNEDNY</sequence>
<keyword id="KW-0963">Cytoplasm</keyword>
<keyword id="KW-0255">Endonuclease</keyword>
<keyword id="KW-0378">Hydrolase</keyword>
<keyword id="KW-0460">Magnesium</keyword>
<keyword id="KW-0479">Metal-binding</keyword>
<keyword id="KW-0540">Nuclease</keyword>
<keyword id="KW-0690">Ribosome biogenesis</keyword>
<keyword id="KW-0694">RNA-binding</keyword>
<keyword id="KW-0698">rRNA processing</keyword>
<keyword id="KW-0699">rRNA-binding</keyword>
<accession>D8IJV0</accession>
<protein>
    <recommendedName>
        <fullName evidence="1">Ribonuclease M5 1</fullName>
        <ecNumber evidence="1">3.1.26.8</ecNumber>
    </recommendedName>
    <alternativeName>
        <fullName evidence="1">RNase M5 1</fullName>
    </alternativeName>
    <alternativeName>
        <fullName evidence="1">Ribosomal RNA terminal maturase M5 1</fullName>
    </alternativeName>
</protein>
<name>RNM51_LIGS5</name>
<proteinExistence type="inferred from homology"/>
<feature type="chain" id="PRO_0000416749" description="Ribonuclease M5 1">
    <location>
        <begin position="1"/>
        <end position="191"/>
    </location>
</feature>
<feature type="domain" description="Toprim" evidence="1">
    <location>
        <begin position="10"/>
        <end position="93"/>
    </location>
</feature>
<feature type="binding site" evidence="1">
    <location>
        <position position="16"/>
    </location>
    <ligand>
        <name>Mg(2+)</name>
        <dbReference type="ChEBI" id="CHEBI:18420"/>
        <label>1</label>
        <note>catalytic</note>
    </ligand>
</feature>
<feature type="binding site" evidence="1">
    <location>
        <position position="62"/>
    </location>
    <ligand>
        <name>Mg(2+)</name>
        <dbReference type="ChEBI" id="CHEBI:18420"/>
        <label>1</label>
        <note>catalytic</note>
    </ligand>
</feature>
<feature type="binding site" evidence="1">
    <location>
        <position position="62"/>
    </location>
    <ligand>
        <name>Mg(2+)</name>
        <dbReference type="ChEBI" id="CHEBI:18420"/>
        <label>2</label>
    </ligand>
</feature>
<feature type="binding site" evidence="1">
    <location>
        <position position="64"/>
    </location>
    <ligand>
        <name>Mg(2+)</name>
        <dbReference type="ChEBI" id="CHEBI:18420"/>
        <label>2</label>
    </ligand>
</feature>
<dbReference type="EC" id="3.1.26.8" evidence="1"/>
<dbReference type="EMBL" id="CP002034">
    <property type="protein sequence ID" value="ADJ78552.1"/>
    <property type="molecule type" value="Genomic_DNA"/>
</dbReference>
<dbReference type="SMR" id="D8IJV0"/>
<dbReference type="KEGG" id="lsi:HN6_00222"/>
<dbReference type="PATRIC" id="fig|712961.3.peg.1734"/>
<dbReference type="HOGENOM" id="CLU_109405_0_0_9"/>
<dbReference type="GO" id="GO:0005737">
    <property type="term" value="C:cytoplasm"/>
    <property type="evidence" value="ECO:0007669"/>
    <property type="project" value="UniProtKB-SubCell"/>
</dbReference>
<dbReference type="GO" id="GO:0046872">
    <property type="term" value="F:metal ion binding"/>
    <property type="evidence" value="ECO:0007669"/>
    <property type="project" value="UniProtKB-KW"/>
</dbReference>
<dbReference type="GO" id="GO:0043822">
    <property type="term" value="F:ribonuclease M5 activity"/>
    <property type="evidence" value="ECO:0007669"/>
    <property type="project" value="UniProtKB-UniRule"/>
</dbReference>
<dbReference type="GO" id="GO:0019843">
    <property type="term" value="F:rRNA binding"/>
    <property type="evidence" value="ECO:0007669"/>
    <property type="project" value="UniProtKB-KW"/>
</dbReference>
<dbReference type="GO" id="GO:0006364">
    <property type="term" value="P:rRNA processing"/>
    <property type="evidence" value="ECO:0007669"/>
    <property type="project" value="UniProtKB-UniRule"/>
</dbReference>
<dbReference type="CDD" id="cd01027">
    <property type="entry name" value="TOPRIM_RNase_M5_like"/>
    <property type="match status" value="1"/>
</dbReference>
<dbReference type="FunFam" id="3.40.1360.10:FF:000006">
    <property type="entry name" value="Ribonuclease M5"/>
    <property type="match status" value="1"/>
</dbReference>
<dbReference type="Gene3D" id="3.40.1360.10">
    <property type="match status" value="1"/>
</dbReference>
<dbReference type="HAMAP" id="MF_01469">
    <property type="entry name" value="RNase_M5"/>
    <property type="match status" value="1"/>
</dbReference>
<dbReference type="InterPro" id="IPR004466">
    <property type="entry name" value="RNase_M5"/>
</dbReference>
<dbReference type="InterPro" id="IPR025156">
    <property type="entry name" value="RNase_M5_C"/>
</dbReference>
<dbReference type="InterPro" id="IPR006171">
    <property type="entry name" value="TOPRIM_dom"/>
</dbReference>
<dbReference type="InterPro" id="IPR034141">
    <property type="entry name" value="TOPRIM_RNase_M5-like"/>
</dbReference>
<dbReference type="NCBIfam" id="TIGR00334">
    <property type="entry name" value="5S_RNA_mat_M5"/>
    <property type="match status" value="1"/>
</dbReference>
<dbReference type="PANTHER" id="PTHR39156">
    <property type="entry name" value="RIBONUCLEASE M5"/>
    <property type="match status" value="1"/>
</dbReference>
<dbReference type="PANTHER" id="PTHR39156:SF1">
    <property type="entry name" value="RIBONUCLEASE M5"/>
    <property type="match status" value="1"/>
</dbReference>
<dbReference type="Pfam" id="PF13331">
    <property type="entry name" value="DUF4093"/>
    <property type="match status" value="1"/>
</dbReference>
<dbReference type="Pfam" id="PF01751">
    <property type="entry name" value="Toprim"/>
    <property type="match status" value="1"/>
</dbReference>
<dbReference type="SMART" id="SM00493">
    <property type="entry name" value="TOPRIM"/>
    <property type="match status" value="1"/>
</dbReference>
<dbReference type="SUPFAM" id="SSF110455">
    <property type="entry name" value="Toprim domain"/>
    <property type="match status" value="1"/>
</dbReference>
<dbReference type="PROSITE" id="PS50880">
    <property type="entry name" value="TOPRIM"/>
    <property type="match status" value="1"/>
</dbReference>
<evidence type="ECO:0000255" key="1">
    <source>
        <dbReference type="HAMAP-Rule" id="MF_01469"/>
    </source>
</evidence>